<organism>
    <name type="scientific">Xenopus laevis</name>
    <name type="common">African clawed frog</name>
    <dbReference type="NCBI Taxonomy" id="8355"/>
    <lineage>
        <taxon>Eukaryota</taxon>
        <taxon>Metazoa</taxon>
        <taxon>Chordata</taxon>
        <taxon>Craniata</taxon>
        <taxon>Vertebrata</taxon>
        <taxon>Euteleostomi</taxon>
        <taxon>Amphibia</taxon>
        <taxon>Batrachia</taxon>
        <taxon>Anura</taxon>
        <taxon>Pipoidea</taxon>
        <taxon>Pipidae</taxon>
        <taxon>Xenopodinae</taxon>
        <taxon>Xenopus</taxon>
        <taxon>Xenopus</taxon>
    </lineage>
</organism>
<protein>
    <recommendedName>
        <fullName>E3 ubiquitin-protein ligase DTX1</fullName>
        <ecNumber evidence="1">2.3.2.27</ecNumber>
    </recommendedName>
    <alternativeName>
        <fullName>Protein deltex-1</fullName>
        <shortName>xDtx1</shortName>
    </alternativeName>
    <alternativeName>
        <fullName evidence="7">RING-type E3 ubiquitin transferase DTX1</fullName>
    </alternativeName>
</protein>
<evidence type="ECO:0000250" key="1">
    <source>
        <dbReference type="UniProtKB" id="Q61010"/>
    </source>
</evidence>
<evidence type="ECO:0000250" key="2">
    <source>
        <dbReference type="UniProtKB" id="Q86Y01"/>
    </source>
</evidence>
<evidence type="ECO:0000255" key="3">
    <source>
        <dbReference type="PROSITE-ProRule" id="PRU00175"/>
    </source>
</evidence>
<evidence type="ECO:0000255" key="4">
    <source>
        <dbReference type="PROSITE-ProRule" id="PRU00248"/>
    </source>
</evidence>
<evidence type="ECO:0000256" key="5">
    <source>
        <dbReference type="SAM" id="MobiDB-lite"/>
    </source>
</evidence>
<evidence type="ECO:0000269" key="6">
    <source>
    </source>
</evidence>
<evidence type="ECO:0000305" key="7"/>
<keyword id="KW-0479">Metal-binding</keyword>
<keyword id="KW-0914">Notch signaling pathway</keyword>
<keyword id="KW-1185">Reference proteome</keyword>
<keyword id="KW-0677">Repeat</keyword>
<keyword id="KW-0808">Transferase</keyword>
<keyword id="KW-0833">Ubl conjugation pathway</keyword>
<keyword id="KW-0862">Zinc</keyword>
<keyword id="KW-0863">Zinc-finger</keyword>
<dbReference type="EC" id="2.3.2.27" evidence="1"/>
<dbReference type="EMBL" id="AJ431211">
    <property type="protein sequence ID" value="CAD26517.1"/>
    <property type="molecule type" value="mRNA"/>
</dbReference>
<dbReference type="RefSeq" id="NP_001082450.1">
    <property type="nucleotide sequence ID" value="NM_001088981.1"/>
</dbReference>
<dbReference type="SMR" id="Q8AW93"/>
<dbReference type="GeneID" id="398477"/>
<dbReference type="KEGG" id="xla:398477"/>
<dbReference type="AGR" id="Xenbase:XB-GENE-865444"/>
<dbReference type="CTD" id="398477"/>
<dbReference type="Xenbase" id="XB-GENE-865444">
    <property type="gene designation" value="dtx1.L"/>
</dbReference>
<dbReference type="OrthoDB" id="2449614at2759"/>
<dbReference type="UniPathway" id="UPA00143"/>
<dbReference type="Proteomes" id="UP000186698">
    <property type="component" value="Chromosome 1L"/>
</dbReference>
<dbReference type="Bgee" id="398477">
    <property type="expression patterns" value="Expressed in camera-type eye and 5 other cell types or tissues"/>
</dbReference>
<dbReference type="GO" id="GO:0005654">
    <property type="term" value="C:nucleoplasm"/>
    <property type="evidence" value="ECO:0000318"/>
    <property type="project" value="GO_Central"/>
</dbReference>
<dbReference type="GO" id="GO:0061630">
    <property type="term" value="F:ubiquitin protein ligase activity"/>
    <property type="evidence" value="ECO:0000318"/>
    <property type="project" value="GO_Central"/>
</dbReference>
<dbReference type="GO" id="GO:0008270">
    <property type="term" value="F:zinc ion binding"/>
    <property type="evidence" value="ECO:0007669"/>
    <property type="project" value="UniProtKB-KW"/>
</dbReference>
<dbReference type="GO" id="GO:0007219">
    <property type="term" value="P:Notch signaling pathway"/>
    <property type="evidence" value="ECO:0000318"/>
    <property type="project" value="GO_Central"/>
</dbReference>
<dbReference type="GO" id="GO:0016567">
    <property type="term" value="P:protein ubiquitination"/>
    <property type="evidence" value="ECO:0000318"/>
    <property type="project" value="GO_Central"/>
</dbReference>
<dbReference type="CDD" id="cd09633">
    <property type="entry name" value="Deltex_C"/>
    <property type="match status" value="1"/>
</dbReference>
<dbReference type="CDD" id="cd16671">
    <property type="entry name" value="RING-H2_DTX1_4"/>
    <property type="match status" value="1"/>
</dbReference>
<dbReference type="FunFam" id="3.30.40.10:FF:000097">
    <property type="entry name" value="E3 ubiquitin-protein ligase DTX4"/>
    <property type="match status" value="1"/>
</dbReference>
<dbReference type="FunFam" id="3.30.720.50:FF:000005">
    <property type="entry name" value="Probable E3 ubiquitin-protein ligase DTX2"/>
    <property type="match status" value="1"/>
</dbReference>
<dbReference type="FunFam" id="3.30.390.130:FF:000001">
    <property type="entry name" value="Probable E3 ubiquitin-protein ligase DTX3"/>
    <property type="match status" value="1"/>
</dbReference>
<dbReference type="Gene3D" id="3.30.390.130">
    <property type="match status" value="1"/>
</dbReference>
<dbReference type="Gene3D" id="3.30.720.50">
    <property type="match status" value="2"/>
</dbReference>
<dbReference type="Gene3D" id="3.30.40.10">
    <property type="entry name" value="Zinc/RING finger domain, C3HC4 (zinc finger)"/>
    <property type="match status" value="1"/>
</dbReference>
<dbReference type="InterPro" id="IPR039396">
    <property type="entry name" value="Deltex_C"/>
</dbReference>
<dbReference type="InterPro" id="IPR039399">
    <property type="entry name" value="Deltex_C_sf"/>
</dbReference>
<dbReference type="InterPro" id="IPR039398">
    <property type="entry name" value="Deltex_fam"/>
</dbReference>
<dbReference type="InterPro" id="IPR018123">
    <property type="entry name" value="WWE-dom_subgr"/>
</dbReference>
<dbReference type="InterPro" id="IPR004170">
    <property type="entry name" value="WWE_dom"/>
</dbReference>
<dbReference type="InterPro" id="IPR037197">
    <property type="entry name" value="WWE_dom_sf"/>
</dbReference>
<dbReference type="InterPro" id="IPR001841">
    <property type="entry name" value="Znf_RING"/>
</dbReference>
<dbReference type="InterPro" id="IPR013083">
    <property type="entry name" value="Znf_RING/FYVE/PHD"/>
</dbReference>
<dbReference type="PANTHER" id="PTHR12622">
    <property type="entry name" value="DELTEX-RELATED"/>
    <property type="match status" value="1"/>
</dbReference>
<dbReference type="Pfam" id="PF18102">
    <property type="entry name" value="DTC"/>
    <property type="match status" value="1"/>
</dbReference>
<dbReference type="Pfam" id="PF02825">
    <property type="entry name" value="WWE"/>
    <property type="match status" value="2"/>
</dbReference>
<dbReference type="SMART" id="SM00678">
    <property type="entry name" value="WWE"/>
    <property type="match status" value="2"/>
</dbReference>
<dbReference type="SUPFAM" id="SSF57850">
    <property type="entry name" value="RING/U-box"/>
    <property type="match status" value="1"/>
</dbReference>
<dbReference type="SUPFAM" id="SSF117839">
    <property type="entry name" value="WWE domain"/>
    <property type="match status" value="2"/>
</dbReference>
<dbReference type="PROSITE" id="PS50918">
    <property type="entry name" value="WWE"/>
    <property type="match status" value="2"/>
</dbReference>
<dbReference type="PROSITE" id="PS50089">
    <property type="entry name" value="ZF_RING_2"/>
    <property type="match status" value="1"/>
</dbReference>
<accession>Q8AW93</accession>
<name>DTX1_XENLA</name>
<feature type="chain" id="PRO_0000219082" description="E3 ubiquitin-protein ligase DTX1">
    <location>
        <begin position="1"/>
        <end position="623"/>
    </location>
</feature>
<feature type="domain" description="WWE 1" evidence="4">
    <location>
        <begin position="13"/>
        <end position="93"/>
    </location>
</feature>
<feature type="domain" description="WWE 2" evidence="4">
    <location>
        <begin position="94"/>
        <end position="170"/>
    </location>
</feature>
<feature type="zinc finger region" description="RING-type" evidence="3">
    <location>
        <begin position="413"/>
        <end position="474"/>
    </location>
</feature>
<feature type="region of interest" description="Disordered" evidence="5">
    <location>
        <begin position="224"/>
        <end position="319"/>
    </location>
</feature>
<feature type="compositionally biased region" description="Pro residues" evidence="5">
    <location>
        <begin position="227"/>
        <end position="242"/>
    </location>
</feature>
<feature type="compositionally biased region" description="Polar residues" evidence="5">
    <location>
        <begin position="292"/>
        <end position="311"/>
    </location>
</feature>
<gene>
    <name type="primary">dtx1</name>
</gene>
<sequence length="623" mass="68333">MSRPGVLLPVNGHNFGSQGGPPRVVVWEWLNEHGRWRPYTATVCHHIENALREDGRGRVALGQVDAQLTPYVIDLQTMHQYRQDTGTIRPVRRNFFEPSSAPGKGIVWEWENDAGSWTPYDTEICIAIQNAYEKHHPYLDLTTLGFCYLVHFHSMCQVNRQTHRKRRLRRRMDLAYPLTMGSIPKSQSWPVGSGSGLPCSCPQCLLVNSTRAASNAILASQRIKVPSGPPPALPPPPPPPIHPSGLRQSNTYSGGAAGWGRTGEGMRSTGGIRNGSGFSRSQSVPGAAPYPGQNNLNRPGEQRTSGSSSRASIPPGVPALPVKNLNGSGPVHPALAGMTGILMCAAGLPVCLTRAPKPILHPPPVSKEDIKPVSGVSGICRKTKKKHLKKSKNPEEVVRRYIQKVKSPPDEDCTICMERLVTASGYDGVLSHRGIRAELVGKLGKCNHMYHVLCPVAMYNNGNKDGSLQCPTCKAIYGEKTGTQPPGKMEFHVIPHSLPGFSDCKTIRIVYDIPSGMQGPEHPNPGKKFTARGFPRHCYLPDNDKGRKVLRLLLAAWERRLIFAIGTSSTTGESNTVVWNEIHHKTEFGSNLTGHGYPDPNYLDNVLTELHRQGVMEERSLPY</sequence>
<proteinExistence type="evidence at transcript level"/>
<reference key="1">
    <citation type="journal article" date="2002" name="Gene Expr. Patterns">
        <title>Xdtx1, a Xenopus Deltex homologue expressed in differentiating neurons and in photoreceptive organs.</title>
        <authorList>
            <person name="Andreazzoli M."/>
            <person name="Marracci S."/>
            <person name="Panattoni M."/>
            <person name="Nardi I."/>
        </authorList>
    </citation>
    <scope>NUCLEOTIDE SEQUENCE [MRNA]</scope>
    <scope>DEVELOPMENTAL STAGE</scope>
</reference>
<comment type="function">
    <text evidence="1">Regulator of Notch signaling, a signaling pathway involved in cell-cell communications that regulates a broad spectrum of cell-fate determinations. Probably acts both as a positive and negative regulator of Notch, depending on the developmental and cell context. Functions as a ubiquitin ligase protein in vivo, mediating ubiquitination and promoting degradation of MEKK1, suggesting that it may regulate the Notch pathway via some ubiquitin ligase activity.</text>
</comment>
<comment type="catalytic activity">
    <reaction evidence="1">
        <text>S-ubiquitinyl-[E2 ubiquitin-conjugating enzyme]-L-cysteine + [acceptor protein]-L-lysine = [E2 ubiquitin-conjugating enzyme]-L-cysteine + N(6)-ubiquitinyl-[acceptor protein]-L-lysine.</text>
        <dbReference type="EC" id="2.3.2.27"/>
    </reaction>
</comment>
<comment type="pathway">
    <text>Protein modification; protein ubiquitination.</text>
</comment>
<comment type="subunit">
    <text evidence="2">May form a homo- or heterodimer with other members of the Deltex family. Probably interacts with Notch1.</text>
</comment>
<comment type="tissue specificity">
    <text>Specifically expressed in regions undergoing neuronal differentiation. Mainly colocalizes with Notch1.</text>
</comment>
<comment type="developmental stage">
    <text evidence="6">In the tailbud stage, it is expressed in the olfactory bulbs, pineal complex and along the neural tube according to an antero-posterior gradient showing a gap at the midbrain-hindbrain boundary. At tadpole stage, it is expressed in the differentiating retina, in the neuronal fibers of the outer and inner plexiform layers, while its expression in the pineal complex becomes restricted to the photosensitive frontal organ.</text>
</comment>
<comment type="domain">
    <text evidence="2">The WWE domains are thought to mediate some protein-protein interaction, and are frequently found in ubiquitin ligases.</text>
</comment>
<comment type="similarity">
    <text evidence="7">Belongs to the Deltex family.</text>
</comment>